<organism>
    <name type="scientific">Sus scrofa</name>
    <name type="common">Pig</name>
    <dbReference type="NCBI Taxonomy" id="9823"/>
    <lineage>
        <taxon>Eukaryota</taxon>
        <taxon>Metazoa</taxon>
        <taxon>Chordata</taxon>
        <taxon>Craniata</taxon>
        <taxon>Vertebrata</taxon>
        <taxon>Euteleostomi</taxon>
        <taxon>Mammalia</taxon>
        <taxon>Eutheria</taxon>
        <taxon>Laurasiatheria</taxon>
        <taxon>Artiodactyla</taxon>
        <taxon>Suina</taxon>
        <taxon>Suidae</taxon>
        <taxon>Sus</taxon>
    </lineage>
</organism>
<evidence type="ECO:0000250" key="1"/>
<evidence type="ECO:0000250" key="2">
    <source>
        <dbReference type="UniProtKB" id="Q6P2C8"/>
    </source>
</evidence>
<evidence type="ECO:0000305" key="3"/>
<protein>
    <recommendedName>
        <fullName>Mediator of RNA polymerase II transcription subunit 27</fullName>
    </recommendedName>
    <alternativeName>
        <fullName>Cofactor required for Sp1 transcriptional activation subunit 8</fullName>
        <shortName>CRSP complex subunit 8</shortName>
    </alternativeName>
    <alternativeName>
        <fullName>Mediator complex subunit 27</fullName>
    </alternativeName>
</protein>
<dbReference type="EMBL" id="AY553926">
    <property type="protein sequence ID" value="AAS76547.1"/>
    <property type="molecule type" value="mRNA"/>
</dbReference>
<dbReference type="RefSeq" id="NP_001001644.1">
    <property type="nucleotide sequence ID" value="NM_001001644.1"/>
</dbReference>
<dbReference type="SMR" id="Q6Q7J5"/>
<dbReference type="FunCoup" id="Q6Q7J5">
    <property type="interactions" value="2200"/>
</dbReference>
<dbReference type="STRING" id="9823.ENSSSCP00000034741"/>
<dbReference type="PaxDb" id="9823-ENSSSCP00000006128"/>
<dbReference type="Ensembl" id="ENSSSCT00000053035.2">
    <property type="protein sequence ID" value="ENSSSCP00000034741.1"/>
    <property type="gene ID" value="ENSSSCG00000005720.4"/>
</dbReference>
<dbReference type="Ensembl" id="ENSSSCT00015085158.1">
    <property type="protein sequence ID" value="ENSSSCP00015034599.1"/>
    <property type="gene ID" value="ENSSSCG00015063468.1"/>
</dbReference>
<dbReference type="Ensembl" id="ENSSSCT00050017916.1">
    <property type="protein sequence ID" value="ENSSSCP00050007395.1"/>
    <property type="gene ID" value="ENSSSCG00050013272.1"/>
</dbReference>
<dbReference type="Ensembl" id="ENSSSCT00055012870.1">
    <property type="protein sequence ID" value="ENSSSCP00055010123.1"/>
    <property type="gene ID" value="ENSSSCG00055006660.1"/>
</dbReference>
<dbReference type="Ensembl" id="ENSSSCT00070013469.1">
    <property type="protein sequence ID" value="ENSSSCP00070011104.1"/>
    <property type="gene ID" value="ENSSSCG00070006990.1"/>
</dbReference>
<dbReference type="Ensembl" id="ENSSSCT00110077252">
    <property type="protein sequence ID" value="ENSSSCP00110054638"/>
    <property type="gene ID" value="ENSSSCG00110040401"/>
</dbReference>
<dbReference type="Ensembl" id="ENSSSCT00115034515">
    <property type="protein sequence ID" value="ENSSSCP00115032764"/>
    <property type="gene ID" value="ENSSSCG00115019488"/>
</dbReference>
<dbReference type="Ensembl" id="ENSSSCT00130056764">
    <property type="protein sequence ID" value="ENSSSCP00130040661"/>
    <property type="gene ID" value="ENSSSCG00130029043"/>
</dbReference>
<dbReference type="GeneID" id="414430"/>
<dbReference type="KEGG" id="ssc:414430"/>
<dbReference type="CTD" id="9442"/>
<dbReference type="VGNC" id="VGNC:90117">
    <property type="gene designation" value="MED27"/>
</dbReference>
<dbReference type="eggNOG" id="ENOG502QS6H">
    <property type="taxonomic scope" value="Eukaryota"/>
</dbReference>
<dbReference type="GeneTree" id="ENSGT00390000012207"/>
<dbReference type="HOGENOM" id="CLU_056015_0_0_1"/>
<dbReference type="InParanoid" id="Q6Q7J5"/>
<dbReference type="OMA" id="FHEDCRN"/>
<dbReference type="OrthoDB" id="1868004at2759"/>
<dbReference type="TreeFam" id="TF323728"/>
<dbReference type="Reactome" id="R-SSC-212436">
    <property type="pathway name" value="Generic Transcription Pathway"/>
</dbReference>
<dbReference type="Reactome" id="R-SSC-9841922">
    <property type="pathway name" value="MLL4 and MLL3 complexes regulate expression of PPARG target genes in adipogenesis and hepatic steatosis"/>
</dbReference>
<dbReference type="ChiTaRS" id="MED27">
    <property type="organism name" value="pig"/>
</dbReference>
<dbReference type="Proteomes" id="UP000008227">
    <property type="component" value="Chromosome 1"/>
</dbReference>
<dbReference type="Proteomes" id="UP000314985">
    <property type="component" value="Chromosome 1"/>
</dbReference>
<dbReference type="Proteomes" id="UP000694570">
    <property type="component" value="Unplaced"/>
</dbReference>
<dbReference type="Proteomes" id="UP000694571">
    <property type="component" value="Unplaced"/>
</dbReference>
<dbReference type="Proteomes" id="UP000694720">
    <property type="component" value="Unplaced"/>
</dbReference>
<dbReference type="Proteomes" id="UP000694722">
    <property type="component" value="Unplaced"/>
</dbReference>
<dbReference type="Proteomes" id="UP000694723">
    <property type="component" value="Unplaced"/>
</dbReference>
<dbReference type="Proteomes" id="UP000694724">
    <property type="component" value="Unplaced"/>
</dbReference>
<dbReference type="Proteomes" id="UP000694725">
    <property type="component" value="Unplaced"/>
</dbReference>
<dbReference type="Proteomes" id="UP000694726">
    <property type="component" value="Unplaced"/>
</dbReference>
<dbReference type="Proteomes" id="UP000694727">
    <property type="component" value="Unplaced"/>
</dbReference>
<dbReference type="Proteomes" id="UP000694728">
    <property type="component" value="Unplaced"/>
</dbReference>
<dbReference type="Bgee" id="ENSSSCG00000005720">
    <property type="expression patterns" value="Expressed in oocyte and 43 other cell types or tissues"/>
</dbReference>
<dbReference type="ExpressionAtlas" id="Q6Q7J5">
    <property type="expression patterns" value="baseline and differential"/>
</dbReference>
<dbReference type="GO" id="GO:0070847">
    <property type="term" value="C:core mediator complex"/>
    <property type="evidence" value="ECO:0007669"/>
    <property type="project" value="Ensembl"/>
</dbReference>
<dbReference type="GO" id="GO:0005829">
    <property type="term" value="C:cytosol"/>
    <property type="evidence" value="ECO:0007669"/>
    <property type="project" value="Ensembl"/>
</dbReference>
<dbReference type="GO" id="GO:0016592">
    <property type="term" value="C:mediator complex"/>
    <property type="evidence" value="ECO:0000318"/>
    <property type="project" value="GO_Central"/>
</dbReference>
<dbReference type="GO" id="GO:0005730">
    <property type="term" value="C:nucleolus"/>
    <property type="evidence" value="ECO:0007669"/>
    <property type="project" value="Ensembl"/>
</dbReference>
<dbReference type="GO" id="GO:0005654">
    <property type="term" value="C:nucleoplasm"/>
    <property type="evidence" value="ECO:0007669"/>
    <property type="project" value="Ensembl"/>
</dbReference>
<dbReference type="GO" id="GO:0003713">
    <property type="term" value="F:transcription coactivator activity"/>
    <property type="evidence" value="ECO:0000318"/>
    <property type="project" value="GO_Central"/>
</dbReference>
<dbReference type="GO" id="GO:0006357">
    <property type="term" value="P:regulation of transcription by RNA polymerase II"/>
    <property type="evidence" value="ECO:0000318"/>
    <property type="project" value="GO_Central"/>
</dbReference>
<dbReference type="GO" id="GO:0035019">
    <property type="term" value="P:somatic stem cell population maintenance"/>
    <property type="evidence" value="ECO:0007669"/>
    <property type="project" value="Ensembl"/>
</dbReference>
<dbReference type="InterPro" id="IPR021627">
    <property type="entry name" value="Mediator_Med27"/>
</dbReference>
<dbReference type="PANTHER" id="PTHR13130">
    <property type="entry name" value="34 KDA TRANSCRIPTIONAL CO-ACTIVATOR-RELATED"/>
    <property type="match status" value="1"/>
</dbReference>
<dbReference type="PANTHER" id="PTHR13130:SF4">
    <property type="entry name" value="MEDIATOR OF RNA POLYMERASE II TRANSCRIPTION SUBUNIT 27"/>
    <property type="match status" value="1"/>
</dbReference>
<dbReference type="Pfam" id="PF11571">
    <property type="entry name" value="Med27"/>
    <property type="match status" value="1"/>
</dbReference>
<feature type="chain" id="PRO_0000293486" description="Mediator of RNA polymerase II transcription subunit 27">
    <location>
        <begin position="1"/>
        <end position="311"/>
    </location>
</feature>
<feature type="modified residue" description="Phosphoserine" evidence="2">
    <location>
        <position position="132"/>
    </location>
</feature>
<feature type="modified residue" description="N6-methyllysine" evidence="2">
    <location>
        <position position="134"/>
    </location>
</feature>
<accession>Q6Q7J5</accession>
<comment type="function">
    <text evidence="1">Component of the Mediator complex, a coactivator involved in the regulated transcription of nearly all RNA polymerase II-dependent genes. Mediator functions as a bridge to convey information from gene-specific regulatory proteins to the basal RNA polymerase II transcription machinery. Mediator is recruited to promoters by direct interactions with regulatory proteins and serves as a scaffold for the assembly of a functional preinitiation complex with RNA polymerase II and the general transcription factors (By similarity).</text>
</comment>
<comment type="subunit">
    <text evidence="1">Component of the Mediator complex, which is composed of MED1, MED4, MED6, MED7, MED8, MED9, MED10, MED11, MED12, MED13, MED13L, MED14, MED15, MED16, MED17, MED18, MED19, MED20, MED21, MED22, MED23, MED24, MED25, MED26, MED27, MED29, MED30, MED31, CCNC, CDK8 and CDC2L6/CDK11. The MED12, MED13, CCNC and CDK8 subunits form a distinct module termed the CDK8 module. Mediator containing the CDK8 module is less active than Mediator lacking this module in supporting transcriptional activation. Individual preparations of the Mediator complex lacking one or more distinct subunits have been variously termed ARC, CRSP, DRIP, PC2, SMCC and TRAP (By similarity).</text>
</comment>
<comment type="subcellular location">
    <subcellularLocation>
        <location evidence="1">Nucleus</location>
    </subcellularLocation>
</comment>
<comment type="similarity">
    <text evidence="3">Belongs to the Mediator complex subunit 27 family.</text>
</comment>
<proteinExistence type="evidence at transcript level"/>
<keyword id="KW-0010">Activator</keyword>
<keyword id="KW-0488">Methylation</keyword>
<keyword id="KW-0539">Nucleus</keyword>
<keyword id="KW-0597">Phosphoprotein</keyword>
<keyword id="KW-1185">Reference proteome</keyword>
<keyword id="KW-0804">Transcription</keyword>
<keyword id="KW-0805">Transcription regulation</keyword>
<sequence length="311" mass="35375">MADVLSVGVNLEAFSQAISAIQALRSSVSRVFDCLKDGMRNKETLEGREKAFIAHFQDNLHSVNRDLNELERLSNLVGKPSENHPLHNSGLLSLDPVQDKTPLYSQLLQAYKWSNKLQYHAGLASGLLNQQSLKRSANQMGVSAKRRPKAQPTTLVLPPQYVDDVISRIDRMFPEMSIHLSRPNGTSAMLLVTLGKVLKVIVVMRSLFIDRTIVKGYNENVYTEDGKLDIWSKSNYQVFQKVTDHATTALLHYQLPQMPDVVVRSFMTWLRSYIKLFQAPCQRCGKFLQDGLPPTWRDFRTLEAFHDTCRQ</sequence>
<reference key="1">
    <citation type="submission" date="2004-02" db="EMBL/GenBank/DDBJ databases">
        <title>Identification of differentially expressed genes in porcine embryos.</title>
        <authorList>
            <person name="Lee H.Y."/>
            <person name="Cui X.S."/>
            <person name="Shin M.L."/>
            <person name="Jeong Y.J."/>
            <person name="Hwang K.C."/>
            <person name="Kim N.H."/>
        </authorList>
    </citation>
    <scope>NUCLEOTIDE SEQUENCE [MRNA]</scope>
</reference>
<gene>
    <name type="primary">MED27</name>
    <name type="synonym">CRSP8</name>
</gene>
<name>MED27_PIG</name>